<reference key="1">
    <citation type="journal article" date="2006" name="BMC Genomics">
        <title>Comparative genome analysis: selection pressure on the Borrelia vls cassettes is essential for infectivity.</title>
        <authorList>
            <person name="Gloeckner G."/>
            <person name="Schulte-Spechtel U."/>
            <person name="Schilhabel M."/>
            <person name="Felder M."/>
            <person name="Suehnel J."/>
            <person name="Wilske B."/>
            <person name="Platzer M."/>
        </authorList>
    </citation>
    <scope>NUCLEOTIDE SEQUENCE [LARGE SCALE GENOMIC DNA]</scope>
    <source>
        <strain>PKo</strain>
    </source>
</reference>
<reference key="2">
    <citation type="journal article" date="2011" name="J. Bacteriol.">
        <title>Whole-genome sequences of two Borrelia afzelii and two Borrelia garinii Lyme disease agent isolates.</title>
        <authorList>
            <person name="Casjens S.R."/>
            <person name="Mongodin E.F."/>
            <person name="Qiu W.G."/>
            <person name="Dunn J.J."/>
            <person name="Luft B.J."/>
            <person name="Fraser-Liggett C.M."/>
            <person name="Schutzer S.E."/>
        </authorList>
    </citation>
    <scope>NUCLEOTIDE SEQUENCE [LARGE SCALE GENOMIC DNA]</scope>
    <source>
        <strain>PKo</strain>
    </source>
</reference>
<gene>
    <name evidence="1" type="primary">rpoB</name>
    <name type="ordered locus">BAPKO_0404</name>
    <name type="ordered locus">BafPKo_0391</name>
</gene>
<organism>
    <name type="scientific">Borreliella afzelii (strain PKo)</name>
    <name type="common">Borrelia afzelii</name>
    <dbReference type="NCBI Taxonomy" id="390236"/>
    <lineage>
        <taxon>Bacteria</taxon>
        <taxon>Pseudomonadati</taxon>
        <taxon>Spirochaetota</taxon>
        <taxon>Spirochaetia</taxon>
        <taxon>Spirochaetales</taxon>
        <taxon>Borreliaceae</taxon>
        <taxon>Borreliella</taxon>
    </lineage>
</organism>
<sequence>MIKRVHLGQGRADEILDLPNLIEIQLNSYEKFLQLDKLKNKKPLLNEGLESVFRNIFPIKSGNGDVALEYERYYIENDTLNFTEKECKRKGQSYEAVLKVRLNLQFLTTGEIRQKDVYMGTIPLMTERGTFIINGAERVIVSQIHRSPGVVFYKEKDLYSARIIPYRGSWLEFEIDSKKDYLYVKIDRKKRILITLFLRALGFDTREKIIETFYNIKKIKVEEGTKRDLPGQYLAKSINIRENMYYRAGDKITLQDVEDFLQNGVNEIELVDFDGYNDVSGKYFVSSNVILNCLEKEDAFFALKDGSKELPKESVMLAVYGALFPGEPISIDNAENDLKTIFFSERRYDLGRVGRYKLSKKFGSDDLSTSVLTMDDIVNTISHLLRIYEGHDILDDIDHLGNRRVRSVGELLTNIYKGAMSRVEKIAKDRMSNKEVFNLKPQELISVKPIVSAVKEFFATSQLSQFMDQVNPLAELTHKRRLNALGPGGLSRDRAGFEVRDVHYTHYGRMCPIETPEGPNIGLIVSLATYSRVNDYGFLETPYRKVVNGEVTNELEYLSAIDEEKKCIAQANAAFNSDGKYLEDLVSVRISGDYTTTNPKNIDYMDVSPRQLISVSSALIPFLEHNDANRALMGSNMQRQAVPLLFPKPPIVGTGMESVVAKDSGVVVKAKRSGEVILATSNKIVVKPFESENVKDLDEYHIVKYERTNQDTCFNQSVLVKEGQKVERGEIIADGPATRYGELALGNNLLLGVIPWNGFNYEDAILISDRIVKEDLYTSIHIKEFSIEVRETKLGPEKVTGDIPNVSEKILNKLDENGIIRIGTYVKPGDILVGKVTPKSEGDITPEFRLLTSIFGEKAKDVKNNSLKVPHGTEGTVIDVQRITKEDVGNLSPGVEEILKVYVAKKRKLKEGDKMAGRHGNKGVVAKILPVEDMPYLADGTPLDICLNPLGVPSRMNIGQLMESQLGLAGKYLSESYNVPVFESATNEQIQEKLKKAGFNPTSKEILYDGYTGEPFENEVMVGVIYMLKLHHLVDDKMHARSTGPYSLVSQQPLGGKAQFGGQRLGEMEVWALEAYGAAHTLQELLTVKSDDMSGRVKIYENIVKGVPTNVSGIPESFNVLMQELRGLGLDLSIYDDNGNQVPLTEKEEELINKS</sequence>
<accession>Q0SNB8</accession>
<accession>G0IS36</accession>
<protein>
    <recommendedName>
        <fullName evidence="1">DNA-directed RNA polymerase subunit beta</fullName>
        <shortName evidence="1">RNAP subunit beta</shortName>
        <ecNumber evidence="1">2.7.7.6</ecNumber>
    </recommendedName>
    <alternativeName>
        <fullName evidence="1">RNA polymerase subunit beta</fullName>
    </alternativeName>
    <alternativeName>
        <fullName evidence="1">Transcriptase subunit beta</fullName>
    </alternativeName>
</protein>
<comment type="function">
    <text evidence="1">DNA-dependent RNA polymerase catalyzes the transcription of DNA into RNA using the four ribonucleoside triphosphates as substrates.</text>
</comment>
<comment type="catalytic activity">
    <reaction evidence="1">
        <text>RNA(n) + a ribonucleoside 5'-triphosphate = RNA(n+1) + diphosphate</text>
        <dbReference type="Rhea" id="RHEA:21248"/>
        <dbReference type="Rhea" id="RHEA-COMP:14527"/>
        <dbReference type="Rhea" id="RHEA-COMP:17342"/>
        <dbReference type="ChEBI" id="CHEBI:33019"/>
        <dbReference type="ChEBI" id="CHEBI:61557"/>
        <dbReference type="ChEBI" id="CHEBI:140395"/>
        <dbReference type="EC" id="2.7.7.6"/>
    </reaction>
</comment>
<comment type="subunit">
    <text evidence="1">The RNAP catalytic core consists of 2 alpha, 1 beta, 1 beta' and 1 omega subunit. When a sigma factor is associated with the core the holoenzyme is formed, which can initiate transcription.</text>
</comment>
<comment type="similarity">
    <text evidence="1">Belongs to the RNA polymerase beta chain family.</text>
</comment>
<dbReference type="EC" id="2.7.7.6" evidence="1"/>
<dbReference type="EMBL" id="CP000395">
    <property type="protein sequence ID" value="ABH01660.1"/>
    <property type="molecule type" value="Genomic_DNA"/>
</dbReference>
<dbReference type="EMBL" id="CP002933">
    <property type="protein sequence ID" value="AEL69617.1"/>
    <property type="molecule type" value="Genomic_DNA"/>
</dbReference>
<dbReference type="RefSeq" id="WP_011600996.1">
    <property type="nucleotide sequence ID" value="NC_008277.1"/>
</dbReference>
<dbReference type="SMR" id="Q0SNB8"/>
<dbReference type="STRING" id="29518.BLA32_02360"/>
<dbReference type="KEGG" id="baf:BAPKO_0404"/>
<dbReference type="KEGG" id="bafz:BafPKo_0391"/>
<dbReference type="PATRIC" id="fig|390236.22.peg.384"/>
<dbReference type="eggNOG" id="COG0085">
    <property type="taxonomic scope" value="Bacteria"/>
</dbReference>
<dbReference type="HOGENOM" id="CLU_000524_4_1_12"/>
<dbReference type="OrthoDB" id="9803954at2"/>
<dbReference type="Proteomes" id="UP000005216">
    <property type="component" value="Chromosome"/>
</dbReference>
<dbReference type="GO" id="GO:0000428">
    <property type="term" value="C:DNA-directed RNA polymerase complex"/>
    <property type="evidence" value="ECO:0007669"/>
    <property type="project" value="UniProtKB-KW"/>
</dbReference>
<dbReference type="GO" id="GO:0003677">
    <property type="term" value="F:DNA binding"/>
    <property type="evidence" value="ECO:0007669"/>
    <property type="project" value="UniProtKB-UniRule"/>
</dbReference>
<dbReference type="GO" id="GO:0003899">
    <property type="term" value="F:DNA-directed RNA polymerase activity"/>
    <property type="evidence" value="ECO:0007669"/>
    <property type="project" value="UniProtKB-UniRule"/>
</dbReference>
<dbReference type="GO" id="GO:0032549">
    <property type="term" value="F:ribonucleoside binding"/>
    <property type="evidence" value="ECO:0007669"/>
    <property type="project" value="InterPro"/>
</dbReference>
<dbReference type="GO" id="GO:0006351">
    <property type="term" value="P:DNA-templated transcription"/>
    <property type="evidence" value="ECO:0007669"/>
    <property type="project" value="UniProtKB-UniRule"/>
</dbReference>
<dbReference type="CDD" id="cd00653">
    <property type="entry name" value="RNA_pol_B_RPB2"/>
    <property type="match status" value="1"/>
</dbReference>
<dbReference type="Gene3D" id="2.40.50.100">
    <property type="match status" value="1"/>
</dbReference>
<dbReference type="Gene3D" id="2.40.50.150">
    <property type="match status" value="1"/>
</dbReference>
<dbReference type="Gene3D" id="3.90.1100.10">
    <property type="match status" value="2"/>
</dbReference>
<dbReference type="Gene3D" id="2.30.150.10">
    <property type="entry name" value="DNA-directed RNA polymerase, beta subunit, external 1 domain"/>
    <property type="match status" value="1"/>
</dbReference>
<dbReference type="Gene3D" id="2.40.270.10">
    <property type="entry name" value="DNA-directed RNA polymerase, subunit 2, domain 6"/>
    <property type="match status" value="2"/>
</dbReference>
<dbReference type="Gene3D" id="3.90.1800.10">
    <property type="entry name" value="RNA polymerase alpha subunit dimerisation domain"/>
    <property type="match status" value="1"/>
</dbReference>
<dbReference type="Gene3D" id="3.90.1110.10">
    <property type="entry name" value="RNA polymerase Rpb2, domain 2"/>
    <property type="match status" value="2"/>
</dbReference>
<dbReference type="HAMAP" id="MF_01321">
    <property type="entry name" value="RNApol_bact_RpoB"/>
    <property type="match status" value="1"/>
</dbReference>
<dbReference type="InterPro" id="IPR042107">
    <property type="entry name" value="DNA-dir_RNA_pol_bsu_ext_1_sf"/>
</dbReference>
<dbReference type="InterPro" id="IPR019462">
    <property type="entry name" value="DNA-dir_RNA_pol_bsu_external_1"/>
</dbReference>
<dbReference type="InterPro" id="IPR015712">
    <property type="entry name" value="DNA-dir_RNA_pol_su2"/>
</dbReference>
<dbReference type="InterPro" id="IPR007120">
    <property type="entry name" value="DNA-dir_RNAP_su2_dom"/>
</dbReference>
<dbReference type="InterPro" id="IPR037033">
    <property type="entry name" value="DNA-dir_RNAP_su2_hyb_sf"/>
</dbReference>
<dbReference type="InterPro" id="IPR010243">
    <property type="entry name" value="RNA_pol_bsu_bac"/>
</dbReference>
<dbReference type="InterPro" id="IPR007121">
    <property type="entry name" value="RNA_pol_bsu_CS"/>
</dbReference>
<dbReference type="InterPro" id="IPR007644">
    <property type="entry name" value="RNA_pol_bsu_protrusion"/>
</dbReference>
<dbReference type="InterPro" id="IPR007642">
    <property type="entry name" value="RNA_pol_Rpb2_2"/>
</dbReference>
<dbReference type="InterPro" id="IPR037034">
    <property type="entry name" value="RNA_pol_Rpb2_2_sf"/>
</dbReference>
<dbReference type="InterPro" id="IPR007645">
    <property type="entry name" value="RNA_pol_Rpb2_3"/>
</dbReference>
<dbReference type="InterPro" id="IPR007641">
    <property type="entry name" value="RNA_pol_Rpb2_7"/>
</dbReference>
<dbReference type="InterPro" id="IPR014724">
    <property type="entry name" value="RNA_pol_RPB2_OB-fold"/>
</dbReference>
<dbReference type="NCBIfam" id="NF001616">
    <property type="entry name" value="PRK00405.1"/>
    <property type="match status" value="1"/>
</dbReference>
<dbReference type="NCBIfam" id="TIGR02013">
    <property type="entry name" value="rpoB"/>
    <property type="match status" value="1"/>
</dbReference>
<dbReference type="PANTHER" id="PTHR20856">
    <property type="entry name" value="DNA-DIRECTED RNA POLYMERASE I SUBUNIT 2"/>
    <property type="match status" value="1"/>
</dbReference>
<dbReference type="Pfam" id="PF04563">
    <property type="entry name" value="RNA_pol_Rpb2_1"/>
    <property type="match status" value="1"/>
</dbReference>
<dbReference type="Pfam" id="PF04561">
    <property type="entry name" value="RNA_pol_Rpb2_2"/>
    <property type="match status" value="2"/>
</dbReference>
<dbReference type="Pfam" id="PF04565">
    <property type="entry name" value="RNA_pol_Rpb2_3"/>
    <property type="match status" value="1"/>
</dbReference>
<dbReference type="Pfam" id="PF10385">
    <property type="entry name" value="RNA_pol_Rpb2_45"/>
    <property type="match status" value="1"/>
</dbReference>
<dbReference type="Pfam" id="PF00562">
    <property type="entry name" value="RNA_pol_Rpb2_6"/>
    <property type="match status" value="1"/>
</dbReference>
<dbReference type="Pfam" id="PF04560">
    <property type="entry name" value="RNA_pol_Rpb2_7"/>
    <property type="match status" value="1"/>
</dbReference>
<dbReference type="SUPFAM" id="SSF64484">
    <property type="entry name" value="beta and beta-prime subunits of DNA dependent RNA-polymerase"/>
    <property type="match status" value="1"/>
</dbReference>
<dbReference type="PROSITE" id="PS01166">
    <property type="entry name" value="RNA_POL_BETA"/>
    <property type="match status" value="1"/>
</dbReference>
<keyword id="KW-0240">DNA-directed RNA polymerase</keyword>
<keyword id="KW-0548">Nucleotidyltransferase</keyword>
<keyword id="KW-0804">Transcription</keyword>
<keyword id="KW-0808">Transferase</keyword>
<evidence type="ECO:0000255" key="1">
    <source>
        <dbReference type="HAMAP-Rule" id="MF_01321"/>
    </source>
</evidence>
<evidence type="ECO:0000305" key="2"/>
<name>RPOB_BORAP</name>
<feature type="chain" id="PRO_0000300285" description="DNA-directed RNA polymerase subunit beta">
    <location>
        <begin position="1"/>
        <end position="1155"/>
    </location>
</feature>
<feature type="sequence conflict" description="In Ref. 2; AEL69617." evidence="2" ref="2">
    <original>S</original>
    <variation>R</variation>
    <location>
        <position position="446"/>
    </location>
</feature>
<proteinExistence type="inferred from homology"/>